<protein>
    <recommendedName>
        <fullName evidence="1">Holliday junction branch migration complex subunit RuvA</fullName>
    </recommendedName>
</protein>
<evidence type="ECO:0000255" key="1">
    <source>
        <dbReference type="HAMAP-Rule" id="MF_00031"/>
    </source>
</evidence>
<keyword id="KW-0963">Cytoplasm</keyword>
<keyword id="KW-0227">DNA damage</keyword>
<keyword id="KW-0233">DNA recombination</keyword>
<keyword id="KW-0234">DNA repair</keyword>
<keyword id="KW-0238">DNA-binding</keyword>
<reference key="1">
    <citation type="submission" date="2009-07" db="EMBL/GenBank/DDBJ databases">
        <title>Complete sequence of Pectobacterium carotovorum subsp. carotovorum PC1.</title>
        <authorList>
            <consortium name="US DOE Joint Genome Institute"/>
            <person name="Lucas S."/>
            <person name="Copeland A."/>
            <person name="Lapidus A."/>
            <person name="Glavina del Rio T."/>
            <person name="Tice H."/>
            <person name="Bruce D."/>
            <person name="Goodwin L."/>
            <person name="Pitluck S."/>
            <person name="Munk A.C."/>
            <person name="Brettin T."/>
            <person name="Detter J.C."/>
            <person name="Han C."/>
            <person name="Tapia R."/>
            <person name="Larimer F."/>
            <person name="Land M."/>
            <person name="Hauser L."/>
            <person name="Kyrpides N."/>
            <person name="Mikhailova N."/>
            <person name="Balakrishnan V."/>
            <person name="Glasner J."/>
            <person name="Perna N.T."/>
        </authorList>
    </citation>
    <scope>NUCLEOTIDE SEQUENCE [LARGE SCALE GENOMIC DNA]</scope>
    <source>
        <strain>PC1</strain>
    </source>
</reference>
<proteinExistence type="inferred from homology"/>
<name>RUVA_PECCP</name>
<accession>C6DFF1</accession>
<gene>
    <name evidence="1" type="primary">ruvA</name>
    <name type="ordered locus">PC1_1819</name>
</gene>
<feature type="chain" id="PRO_1000201998" description="Holliday junction branch migration complex subunit RuvA">
    <location>
        <begin position="1"/>
        <end position="205"/>
    </location>
</feature>
<feature type="region of interest" description="Domain I" evidence="1">
    <location>
        <begin position="1"/>
        <end position="64"/>
    </location>
</feature>
<feature type="region of interest" description="Domain II" evidence="1">
    <location>
        <begin position="65"/>
        <end position="142"/>
    </location>
</feature>
<feature type="region of interest" description="Flexible linker" evidence="1">
    <location>
        <begin position="143"/>
        <end position="156"/>
    </location>
</feature>
<feature type="region of interest" description="Domain III" evidence="1">
    <location>
        <begin position="157"/>
        <end position="205"/>
    </location>
</feature>
<organism>
    <name type="scientific">Pectobacterium carotovorum subsp. carotovorum (strain PC1)</name>
    <dbReference type="NCBI Taxonomy" id="561230"/>
    <lineage>
        <taxon>Bacteria</taxon>
        <taxon>Pseudomonadati</taxon>
        <taxon>Pseudomonadota</taxon>
        <taxon>Gammaproteobacteria</taxon>
        <taxon>Enterobacterales</taxon>
        <taxon>Pectobacteriaceae</taxon>
        <taxon>Pectobacterium</taxon>
    </lineage>
</organism>
<sequence>MIGRLRGIILEKQPPQVLIEANGVGYEVHMPMTCFYELPELNQEAIIFTHFVVREDAQLLFGFNDKQERALFRELIKVNGVGPKLALAILSGMSATQFVSAVEREEIGALIKLPGVGKKTAERLVVEMKDRFKGLSGDLFNPVSDIPLASPASAESRASDPEAEAAAALVALGYKPQEASRMISKIARPEADCETLIRDALRAAL</sequence>
<comment type="function">
    <text evidence="1">The RuvA-RuvB-RuvC complex processes Holliday junction (HJ) DNA during genetic recombination and DNA repair, while the RuvA-RuvB complex plays an important role in the rescue of blocked DNA replication forks via replication fork reversal (RFR). RuvA specifically binds to HJ cruciform DNA, conferring on it an open structure. The RuvB hexamer acts as an ATP-dependent pump, pulling dsDNA into and through the RuvAB complex. HJ branch migration allows RuvC to scan DNA until it finds its consensus sequence, where it cleaves and resolves the cruciform DNA.</text>
</comment>
<comment type="subunit">
    <text evidence="1">Homotetramer. Forms an RuvA(8)-RuvB(12)-Holliday junction (HJ) complex. HJ DNA is sandwiched between 2 RuvA tetramers; dsDNA enters through RuvA and exits via RuvB. An RuvB hexamer assembles on each DNA strand where it exits the tetramer. Each RuvB hexamer is contacted by two RuvA subunits (via domain III) on 2 adjacent RuvB subunits; this complex drives branch migration. In the full resolvosome a probable DNA-RuvA(4)-RuvB(12)-RuvC(2) complex forms which resolves the HJ.</text>
</comment>
<comment type="subcellular location">
    <subcellularLocation>
        <location evidence="1">Cytoplasm</location>
    </subcellularLocation>
</comment>
<comment type="domain">
    <text evidence="1">Has three domains with a flexible linker between the domains II and III and assumes an 'L' shape. Domain III is highly mobile and contacts RuvB.</text>
</comment>
<comment type="similarity">
    <text evidence="1">Belongs to the RuvA family.</text>
</comment>
<dbReference type="EMBL" id="CP001657">
    <property type="protein sequence ID" value="ACT12860.1"/>
    <property type="molecule type" value="Genomic_DNA"/>
</dbReference>
<dbReference type="RefSeq" id="WP_015840064.1">
    <property type="nucleotide sequence ID" value="NC_012917.1"/>
</dbReference>
<dbReference type="SMR" id="C6DFF1"/>
<dbReference type="STRING" id="561230.PC1_1819"/>
<dbReference type="KEGG" id="pct:PC1_1819"/>
<dbReference type="eggNOG" id="COG0632">
    <property type="taxonomic scope" value="Bacteria"/>
</dbReference>
<dbReference type="HOGENOM" id="CLU_087936_0_0_6"/>
<dbReference type="OrthoDB" id="5293449at2"/>
<dbReference type="Proteomes" id="UP000002736">
    <property type="component" value="Chromosome"/>
</dbReference>
<dbReference type="GO" id="GO:0005737">
    <property type="term" value="C:cytoplasm"/>
    <property type="evidence" value="ECO:0007669"/>
    <property type="project" value="UniProtKB-SubCell"/>
</dbReference>
<dbReference type="GO" id="GO:0009379">
    <property type="term" value="C:Holliday junction helicase complex"/>
    <property type="evidence" value="ECO:0007669"/>
    <property type="project" value="InterPro"/>
</dbReference>
<dbReference type="GO" id="GO:0048476">
    <property type="term" value="C:Holliday junction resolvase complex"/>
    <property type="evidence" value="ECO:0007669"/>
    <property type="project" value="UniProtKB-UniRule"/>
</dbReference>
<dbReference type="GO" id="GO:0005524">
    <property type="term" value="F:ATP binding"/>
    <property type="evidence" value="ECO:0007669"/>
    <property type="project" value="InterPro"/>
</dbReference>
<dbReference type="GO" id="GO:0000400">
    <property type="term" value="F:four-way junction DNA binding"/>
    <property type="evidence" value="ECO:0007669"/>
    <property type="project" value="UniProtKB-UniRule"/>
</dbReference>
<dbReference type="GO" id="GO:0009378">
    <property type="term" value="F:four-way junction helicase activity"/>
    <property type="evidence" value="ECO:0007669"/>
    <property type="project" value="InterPro"/>
</dbReference>
<dbReference type="GO" id="GO:0006310">
    <property type="term" value="P:DNA recombination"/>
    <property type="evidence" value="ECO:0007669"/>
    <property type="project" value="UniProtKB-UniRule"/>
</dbReference>
<dbReference type="GO" id="GO:0006281">
    <property type="term" value="P:DNA repair"/>
    <property type="evidence" value="ECO:0007669"/>
    <property type="project" value="UniProtKB-UniRule"/>
</dbReference>
<dbReference type="CDD" id="cd14332">
    <property type="entry name" value="UBA_RuvA_C"/>
    <property type="match status" value="1"/>
</dbReference>
<dbReference type="FunFam" id="1.10.150.20:FF:000012">
    <property type="entry name" value="Holliday junction ATP-dependent DNA helicase RuvA"/>
    <property type="match status" value="1"/>
</dbReference>
<dbReference type="FunFam" id="2.40.50.140:FF:000083">
    <property type="entry name" value="Holliday junction ATP-dependent DNA helicase RuvA"/>
    <property type="match status" value="1"/>
</dbReference>
<dbReference type="Gene3D" id="1.10.150.20">
    <property type="entry name" value="5' to 3' exonuclease, C-terminal subdomain"/>
    <property type="match status" value="1"/>
</dbReference>
<dbReference type="Gene3D" id="1.10.8.10">
    <property type="entry name" value="DNA helicase RuvA subunit, C-terminal domain"/>
    <property type="match status" value="1"/>
</dbReference>
<dbReference type="Gene3D" id="2.40.50.140">
    <property type="entry name" value="Nucleic acid-binding proteins"/>
    <property type="match status" value="1"/>
</dbReference>
<dbReference type="HAMAP" id="MF_00031">
    <property type="entry name" value="DNA_HJ_migration_RuvA"/>
    <property type="match status" value="1"/>
</dbReference>
<dbReference type="InterPro" id="IPR013849">
    <property type="entry name" value="DNA_helicase_Holl-junc_RuvA_I"/>
</dbReference>
<dbReference type="InterPro" id="IPR003583">
    <property type="entry name" value="Hlx-hairpin-Hlx_DNA-bd_motif"/>
</dbReference>
<dbReference type="InterPro" id="IPR012340">
    <property type="entry name" value="NA-bd_OB-fold"/>
</dbReference>
<dbReference type="InterPro" id="IPR000085">
    <property type="entry name" value="RuvA"/>
</dbReference>
<dbReference type="InterPro" id="IPR010994">
    <property type="entry name" value="RuvA_2-like"/>
</dbReference>
<dbReference type="InterPro" id="IPR011114">
    <property type="entry name" value="RuvA_C"/>
</dbReference>
<dbReference type="InterPro" id="IPR036267">
    <property type="entry name" value="RuvA_C_sf"/>
</dbReference>
<dbReference type="NCBIfam" id="TIGR00084">
    <property type="entry name" value="ruvA"/>
    <property type="match status" value="1"/>
</dbReference>
<dbReference type="Pfam" id="PF14520">
    <property type="entry name" value="HHH_5"/>
    <property type="match status" value="1"/>
</dbReference>
<dbReference type="Pfam" id="PF07499">
    <property type="entry name" value="RuvA_C"/>
    <property type="match status" value="1"/>
</dbReference>
<dbReference type="Pfam" id="PF01330">
    <property type="entry name" value="RuvA_N"/>
    <property type="match status" value="1"/>
</dbReference>
<dbReference type="SMART" id="SM00278">
    <property type="entry name" value="HhH1"/>
    <property type="match status" value="2"/>
</dbReference>
<dbReference type="SUPFAM" id="SSF46929">
    <property type="entry name" value="DNA helicase RuvA subunit, C-terminal domain"/>
    <property type="match status" value="1"/>
</dbReference>
<dbReference type="SUPFAM" id="SSF50249">
    <property type="entry name" value="Nucleic acid-binding proteins"/>
    <property type="match status" value="1"/>
</dbReference>
<dbReference type="SUPFAM" id="SSF47781">
    <property type="entry name" value="RuvA domain 2-like"/>
    <property type="match status" value="1"/>
</dbReference>